<keyword id="KW-0067">ATP-binding</keyword>
<keyword id="KW-0436">Ligase</keyword>
<keyword id="KW-0547">Nucleotide-binding</keyword>
<keyword id="KW-0648">Protein biosynthesis</keyword>
<keyword id="KW-1185">Reference proteome</keyword>
<sequence length="509" mass="54633">MTVAAGAAKAAGAELLDYDEVVARFQPVLGLEVHVELSTATKMFCGCTTTFGGEPNTQVCPVCLGLPGSLPVLNRAAVESAIRIGLALNCEIVPWCRFARKNYFYPDMPKNYQISQYDEPIAINGYLDAPLEDGTTWRVEIERAHMEEDTGKLTHIGSETGRIHGATGSLIDYNRAGVPLIEIVTKPIVGAGARAPQIARSYVTALRDLLRALDVSDVRMDQGSMRCDANVSLKPAGTTEFGTRTETKNVNSLKSVEVAVRYEMQRQGAILASGGRITQETRHFHEAGYTSAGRTKETAEDYRYFPEPDLEPVAPSRELVERLRQTIPELPWLSRRRIQQEWGVSDEVMRDLVNAGAVELVAATVEHGASSEAARAWWGNFLAQKANEAGIGLDELAITPAQVAAVVALVDEGKLSNSLARQVVEGVLAGEGEPEQVMTARGLALVRDDSLTQAAVDEALAANPDVADKIRGGKVAAAGAIVGAVMKATRGQADAARVRELVLEACGQG</sequence>
<dbReference type="EC" id="6.3.5.-"/>
<dbReference type="EMBL" id="LT708304">
    <property type="protein sequence ID" value="SIU01658.1"/>
    <property type="molecule type" value="Genomic_DNA"/>
</dbReference>
<dbReference type="RefSeq" id="NP_856679.1">
    <property type="nucleotide sequence ID" value="NC_002945.3"/>
</dbReference>
<dbReference type="RefSeq" id="WP_003415248.1">
    <property type="nucleotide sequence ID" value="NC_002945.4"/>
</dbReference>
<dbReference type="SMR" id="P64200"/>
<dbReference type="KEGG" id="mbo:BQ2027_MB3034C"/>
<dbReference type="PATRIC" id="fig|233413.5.peg.3334"/>
<dbReference type="Proteomes" id="UP000001419">
    <property type="component" value="Chromosome"/>
</dbReference>
<dbReference type="GO" id="GO:0050566">
    <property type="term" value="F:asparaginyl-tRNA synthase (glutamine-hydrolyzing) activity"/>
    <property type="evidence" value="ECO:0007669"/>
    <property type="project" value="RHEA"/>
</dbReference>
<dbReference type="GO" id="GO:0005524">
    <property type="term" value="F:ATP binding"/>
    <property type="evidence" value="ECO:0007669"/>
    <property type="project" value="UniProtKB-KW"/>
</dbReference>
<dbReference type="GO" id="GO:0050567">
    <property type="term" value="F:glutaminyl-tRNA synthase (glutamine-hydrolyzing) activity"/>
    <property type="evidence" value="ECO:0007669"/>
    <property type="project" value="UniProtKB-UniRule"/>
</dbReference>
<dbReference type="GO" id="GO:0070681">
    <property type="term" value="P:glutaminyl-tRNAGln biosynthesis via transamidation"/>
    <property type="evidence" value="ECO:0007669"/>
    <property type="project" value="TreeGrafter"/>
</dbReference>
<dbReference type="GO" id="GO:0006412">
    <property type="term" value="P:translation"/>
    <property type="evidence" value="ECO:0007669"/>
    <property type="project" value="UniProtKB-UniRule"/>
</dbReference>
<dbReference type="FunFam" id="1.10.10.410:FF:000002">
    <property type="entry name" value="Aspartyl/glutamyl-tRNA(Asn/Gln) amidotransferase subunit B"/>
    <property type="match status" value="1"/>
</dbReference>
<dbReference type="Gene3D" id="1.10.10.410">
    <property type="match status" value="1"/>
</dbReference>
<dbReference type="HAMAP" id="MF_00121">
    <property type="entry name" value="GatB"/>
    <property type="match status" value="1"/>
</dbReference>
<dbReference type="InterPro" id="IPR017959">
    <property type="entry name" value="Asn/Gln-tRNA_amidoTrfase_suB/E"/>
</dbReference>
<dbReference type="InterPro" id="IPR006075">
    <property type="entry name" value="Asn/Gln-tRNA_Trfase_suB/E_cat"/>
</dbReference>
<dbReference type="InterPro" id="IPR018027">
    <property type="entry name" value="Asn/Gln_amidotransferase"/>
</dbReference>
<dbReference type="InterPro" id="IPR003789">
    <property type="entry name" value="Asn/Gln_tRNA_amidoTrase-B-like"/>
</dbReference>
<dbReference type="InterPro" id="IPR004413">
    <property type="entry name" value="GatB"/>
</dbReference>
<dbReference type="InterPro" id="IPR023168">
    <property type="entry name" value="GatB_Yqey_C_2"/>
</dbReference>
<dbReference type="InterPro" id="IPR017958">
    <property type="entry name" value="Gln-tRNA_amidoTrfase_suB_CS"/>
</dbReference>
<dbReference type="InterPro" id="IPR014746">
    <property type="entry name" value="Gln_synth/guanido_kin_cat_dom"/>
</dbReference>
<dbReference type="NCBIfam" id="TIGR00133">
    <property type="entry name" value="gatB"/>
    <property type="match status" value="1"/>
</dbReference>
<dbReference type="NCBIfam" id="NF004012">
    <property type="entry name" value="PRK05477.1-2"/>
    <property type="match status" value="1"/>
</dbReference>
<dbReference type="NCBIfam" id="NF004013">
    <property type="entry name" value="PRK05477.1-3"/>
    <property type="match status" value="1"/>
</dbReference>
<dbReference type="NCBIfam" id="NF004014">
    <property type="entry name" value="PRK05477.1-4"/>
    <property type="match status" value="1"/>
</dbReference>
<dbReference type="PANTHER" id="PTHR11659">
    <property type="entry name" value="GLUTAMYL-TRNA GLN AMIDOTRANSFERASE SUBUNIT B MITOCHONDRIAL AND PROKARYOTIC PET112-RELATED"/>
    <property type="match status" value="1"/>
</dbReference>
<dbReference type="PANTHER" id="PTHR11659:SF0">
    <property type="entry name" value="GLUTAMYL-TRNA(GLN) AMIDOTRANSFERASE SUBUNIT B, MITOCHONDRIAL"/>
    <property type="match status" value="1"/>
</dbReference>
<dbReference type="Pfam" id="PF02934">
    <property type="entry name" value="GatB_N"/>
    <property type="match status" value="1"/>
</dbReference>
<dbReference type="Pfam" id="PF02637">
    <property type="entry name" value="GatB_Yqey"/>
    <property type="match status" value="1"/>
</dbReference>
<dbReference type="SMART" id="SM00845">
    <property type="entry name" value="GatB_Yqey"/>
    <property type="match status" value="1"/>
</dbReference>
<dbReference type="SUPFAM" id="SSF89095">
    <property type="entry name" value="GatB/YqeY motif"/>
    <property type="match status" value="1"/>
</dbReference>
<dbReference type="SUPFAM" id="SSF55931">
    <property type="entry name" value="Glutamine synthetase/guanido kinase"/>
    <property type="match status" value="1"/>
</dbReference>
<dbReference type="PROSITE" id="PS01234">
    <property type="entry name" value="GATB"/>
    <property type="match status" value="1"/>
</dbReference>
<protein>
    <recommendedName>
        <fullName>Aspartyl/glutamyl-tRNA(Asn/Gln) amidotransferase subunit B</fullName>
        <shortName>Asp/Glu-ADT subunit B</shortName>
        <ecNumber>6.3.5.-</ecNumber>
    </recommendedName>
</protein>
<name>GATB_MYCBO</name>
<proteinExistence type="inferred from homology"/>
<feature type="chain" id="PRO_0000148815" description="Aspartyl/glutamyl-tRNA(Asn/Gln) amidotransferase subunit B">
    <location>
        <begin position="1"/>
        <end position="509"/>
    </location>
</feature>
<evidence type="ECO:0000250" key="1"/>
<evidence type="ECO:0000305" key="2"/>
<comment type="function">
    <text evidence="1">Allows the formation of correctly charged Asn-tRNA(Asn) or Gln-tRNA(Gln) through the transamidation of misacylated Asp-tRNA(Asn) or Glu-tRNA(Gln) in organisms which lack either or both of asparaginyl-tRNA or glutaminyl-tRNA synthetases. The reaction takes place in the presence of glutamine and ATP through an activated phospho-Asp-tRNA(Asn) or phospho-Glu-tRNA(Gln) (By similarity).</text>
</comment>
<comment type="catalytic activity">
    <reaction>
        <text>L-glutamyl-tRNA(Gln) + L-glutamine + ATP + H2O = L-glutaminyl-tRNA(Gln) + L-glutamate + ADP + phosphate + H(+)</text>
        <dbReference type="Rhea" id="RHEA:17521"/>
        <dbReference type="Rhea" id="RHEA-COMP:9681"/>
        <dbReference type="Rhea" id="RHEA-COMP:9684"/>
        <dbReference type="ChEBI" id="CHEBI:15377"/>
        <dbReference type="ChEBI" id="CHEBI:15378"/>
        <dbReference type="ChEBI" id="CHEBI:29985"/>
        <dbReference type="ChEBI" id="CHEBI:30616"/>
        <dbReference type="ChEBI" id="CHEBI:43474"/>
        <dbReference type="ChEBI" id="CHEBI:58359"/>
        <dbReference type="ChEBI" id="CHEBI:78520"/>
        <dbReference type="ChEBI" id="CHEBI:78521"/>
        <dbReference type="ChEBI" id="CHEBI:456216"/>
    </reaction>
</comment>
<comment type="catalytic activity">
    <reaction>
        <text>L-aspartyl-tRNA(Asn) + L-glutamine + ATP + H2O = L-asparaginyl-tRNA(Asn) + L-glutamate + ADP + phosphate + 2 H(+)</text>
        <dbReference type="Rhea" id="RHEA:14513"/>
        <dbReference type="Rhea" id="RHEA-COMP:9674"/>
        <dbReference type="Rhea" id="RHEA-COMP:9677"/>
        <dbReference type="ChEBI" id="CHEBI:15377"/>
        <dbReference type="ChEBI" id="CHEBI:15378"/>
        <dbReference type="ChEBI" id="CHEBI:29985"/>
        <dbReference type="ChEBI" id="CHEBI:30616"/>
        <dbReference type="ChEBI" id="CHEBI:43474"/>
        <dbReference type="ChEBI" id="CHEBI:58359"/>
        <dbReference type="ChEBI" id="CHEBI:78515"/>
        <dbReference type="ChEBI" id="CHEBI:78516"/>
        <dbReference type="ChEBI" id="CHEBI:456216"/>
    </reaction>
</comment>
<comment type="subunit">
    <text evidence="1">Heterotrimer of A, B and C subunits.</text>
</comment>
<comment type="similarity">
    <text evidence="2">Belongs to the GatB/GatE family. GatB subfamily.</text>
</comment>
<organism>
    <name type="scientific">Mycobacterium bovis (strain ATCC BAA-935 / AF2122/97)</name>
    <dbReference type="NCBI Taxonomy" id="233413"/>
    <lineage>
        <taxon>Bacteria</taxon>
        <taxon>Bacillati</taxon>
        <taxon>Actinomycetota</taxon>
        <taxon>Actinomycetes</taxon>
        <taxon>Mycobacteriales</taxon>
        <taxon>Mycobacteriaceae</taxon>
        <taxon>Mycobacterium</taxon>
        <taxon>Mycobacterium tuberculosis complex</taxon>
    </lineage>
</organism>
<accession>P64200</accession>
<accession>A0A1R3Y389</accession>
<accession>O53256</accession>
<accession>X2BM48</accession>
<gene>
    <name type="primary">gatB</name>
    <name type="ordered locus">BQ2027_MB3034C</name>
</gene>
<reference key="1">
    <citation type="journal article" date="2003" name="Proc. Natl. Acad. Sci. U.S.A.">
        <title>The complete genome sequence of Mycobacterium bovis.</title>
        <authorList>
            <person name="Garnier T."/>
            <person name="Eiglmeier K."/>
            <person name="Camus J.-C."/>
            <person name="Medina N."/>
            <person name="Mansoor H."/>
            <person name="Pryor M."/>
            <person name="Duthoy S."/>
            <person name="Grondin S."/>
            <person name="Lacroix C."/>
            <person name="Monsempe C."/>
            <person name="Simon S."/>
            <person name="Harris B."/>
            <person name="Atkin R."/>
            <person name="Doggett J."/>
            <person name="Mayes R."/>
            <person name="Keating L."/>
            <person name="Wheeler P.R."/>
            <person name="Parkhill J."/>
            <person name="Barrell B.G."/>
            <person name="Cole S.T."/>
            <person name="Gordon S.V."/>
            <person name="Hewinson R.G."/>
        </authorList>
    </citation>
    <scope>NUCLEOTIDE SEQUENCE [LARGE SCALE GENOMIC DNA]</scope>
    <source>
        <strain>ATCC BAA-935 / AF2122/97</strain>
    </source>
</reference>
<reference key="2">
    <citation type="journal article" date="2017" name="Genome Announc.">
        <title>Updated reference genome sequence and annotation of Mycobacterium bovis AF2122/97.</title>
        <authorList>
            <person name="Malone K.M."/>
            <person name="Farrell D."/>
            <person name="Stuber T.P."/>
            <person name="Schubert O.T."/>
            <person name="Aebersold R."/>
            <person name="Robbe-Austerman S."/>
            <person name="Gordon S.V."/>
        </authorList>
    </citation>
    <scope>NUCLEOTIDE SEQUENCE [LARGE SCALE GENOMIC DNA]</scope>
    <scope>GENOME REANNOTATION</scope>
    <source>
        <strain>ATCC BAA-935 / AF2122/97</strain>
    </source>
</reference>